<gene>
    <name type="primary">OR52B4</name>
</gene>
<feature type="chain" id="PRO_0000150768" description="Olfactory receptor 52B4">
    <location>
        <begin position="1"/>
        <end position="314"/>
    </location>
</feature>
<feature type="topological domain" description="Extracellular" evidence="1">
    <location>
        <begin position="1"/>
        <end position="27"/>
    </location>
</feature>
<feature type="transmembrane region" description="Helical; Name=1" evidence="1">
    <location>
        <begin position="28"/>
        <end position="48"/>
    </location>
</feature>
<feature type="topological domain" description="Cytoplasmic" evidence="1">
    <location>
        <begin position="49"/>
        <end position="56"/>
    </location>
</feature>
<feature type="transmembrane region" description="Helical; Name=2" evidence="1">
    <location>
        <begin position="57"/>
        <end position="77"/>
    </location>
</feature>
<feature type="topological domain" description="Extracellular" evidence="1">
    <location>
        <begin position="78"/>
        <end position="101"/>
    </location>
</feature>
<feature type="transmembrane region" description="Helical; Name=3" evidence="1">
    <location>
        <begin position="102"/>
        <end position="122"/>
    </location>
</feature>
<feature type="topological domain" description="Cytoplasmic" evidence="1">
    <location>
        <begin position="123"/>
        <end position="141"/>
    </location>
</feature>
<feature type="transmembrane region" description="Helical; Name=4" evidence="1">
    <location>
        <begin position="142"/>
        <end position="162"/>
    </location>
</feature>
<feature type="topological domain" description="Extracellular" evidence="1">
    <location>
        <begin position="163"/>
        <end position="198"/>
    </location>
</feature>
<feature type="transmembrane region" description="Helical; Name=5" evidence="1">
    <location>
        <begin position="199"/>
        <end position="219"/>
    </location>
</feature>
<feature type="topological domain" description="Cytoplasmic" evidence="1">
    <location>
        <begin position="220"/>
        <end position="239"/>
    </location>
</feature>
<feature type="transmembrane region" description="Helical; Name=6" evidence="1">
    <location>
        <begin position="240"/>
        <end position="260"/>
    </location>
</feature>
<feature type="topological domain" description="Extracellular" evidence="1">
    <location>
        <begin position="261"/>
        <end position="275"/>
    </location>
</feature>
<feature type="transmembrane region" description="Helical; Name=7" evidence="1">
    <location>
        <begin position="276"/>
        <end position="296"/>
    </location>
</feature>
<feature type="topological domain" description="Cytoplasmic" evidence="1">
    <location>
        <begin position="297"/>
        <end position="314"/>
    </location>
</feature>
<feature type="glycosylation site" description="N-linked (GlcNAc...) asparagine" evidence="1">
    <location>
        <position position="5"/>
    </location>
</feature>
<feature type="disulfide bond" evidence="2">
    <location>
        <begin position="99"/>
        <end position="191"/>
    </location>
</feature>
<feature type="sequence variant" id="VAR_037834" description="In dbSNP:rs11031961.">
    <original>T</original>
    <variation>I</variation>
    <location>
        <position position="139"/>
    </location>
</feature>
<name>O52B4_HUMAN</name>
<organism>
    <name type="scientific">Homo sapiens</name>
    <name type="common">Human</name>
    <dbReference type="NCBI Taxonomy" id="9606"/>
    <lineage>
        <taxon>Eukaryota</taxon>
        <taxon>Metazoa</taxon>
        <taxon>Chordata</taxon>
        <taxon>Craniata</taxon>
        <taxon>Vertebrata</taxon>
        <taxon>Euteleostomi</taxon>
        <taxon>Mammalia</taxon>
        <taxon>Eutheria</taxon>
        <taxon>Euarchontoglires</taxon>
        <taxon>Primates</taxon>
        <taxon>Haplorrhini</taxon>
        <taxon>Catarrhini</taxon>
        <taxon>Hominidae</taxon>
        <taxon>Homo</taxon>
    </lineage>
</organism>
<dbReference type="EMBL" id="AB065792">
    <property type="protein sequence ID" value="BAC06011.1"/>
    <property type="molecule type" value="Genomic_DNA"/>
</dbReference>
<dbReference type="EMBL" id="AC009758">
    <property type="status" value="NOT_ANNOTATED_CDS"/>
    <property type="molecule type" value="Genomic_DNA"/>
</dbReference>
<dbReference type="EMBL" id="CH471064">
    <property type="protein sequence ID" value="EAW68847.1"/>
    <property type="molecule type" value="Genomic_DNA"/>
</dbReference>
<dbReference type="EMBL" id="BK004256">
    <property type="protein sequence ID" value="DAA04654.1"/>
    <property type="molecule type" value="Genomic_DNA"/>
</dbReference>
<dbReference type="RefSeq" id="NP_001005161.2">
    <property type="nucleotide sequence ID" value="NM_001005161.3"/>
</dbReference>
<dbReference type="SMR" id="Q8NGK2"/>
<dbReference type="FunCoup" id="Q8NGK2">
    <property type="interactions" value="456"/>
</dbReference>
<dbReference type="STRING" id="9606.ENSP00000485530"/>
<dbReference type="GlyCosmos" id="Q8NGK2">
    <property type="glycosylation" value="1 site, No reported glycans"/>
</dbReference>
<dbReference type="GlyGen" id="Q8NGK2">
    <property type="glycosylation" value="1 site"/>
</dbReference>
<dbReference type="iPTMnet" id="Q8NGK2"/>
<dbReference type="PhosphoSitePlus" id="Q8NGK2"/>
<dbReference type="BioMuta" id="OR52B4"/>
<dbReference type="DMDM" id="68600998"/>
<dbReference type="PaxDb" id="9606-ENSP00000485078"/>
<dbReference type="Antibodypedia" id="78461">
    <property type="antibodies" value="3 antibodies from 3 providers"/>
</dbReference>
<dbReference type="DNASU" id="143496"/>
<dbReference type="Ensembl" id="ENST00000624801.3">
    <property type="protein sequence ID" value="ENSP00000485530.1"/>
    <property type="gene ID" value="ENSG00000221996.6"/>
</dbReference>
<dbReference type="GeneID" id="143496"/>
<dbReference type="KEGG" id="hsa:143496"/>
<dbReference type="MANE-Select" id="ENST00000624801.3">
    <property type="protein sequence ID" value="ENSP00000485530.1"/>
    <property type="RefSeq nucleotide sequence ID" value="NM_001005161.3"/>
    <property type="RefSeq protein sequence ID" value="NP_001005161.2"/>
</dbReference>
<dbReference type="UCSC" id="uc010qye.2">
    <property type="organism name" value="human"/>
</dbReference>
<dbReference type="AGR" id="HGNC:15209"/>
<dbReference type="CTD" id="143496"/>
<dbReference type="DisGeNET" id="143496"/>
<dbReference type="GeneCards" id="OR52B4"/>
<dbReference type="HGNC" id="HGNC:15209">
    <property type="gene designation" value="OR52B4"/>
</dbReference>
<dbReference type="HPA" id="ENSG00000221996">
    <property type="expression patterns" value="Not detected"/>
</dbReference>
<dbReference type="neXtProt" id="NX_Q8NGK2"/>
<dbReference type="PharmGKB" id="PA32398"/>
<dbReference type="VEuPathDB" id="HostDB:ENSG00000221996"/>
<dbReference type="eggNOG" id="ENOG502RTZX">
    <property type="taxonomic scope" value="Eukaryota"/>
</dbReference>
<dbReference type="GeneTree" id="ENSGT01090000260043"/>
<dbReference type="HOGENOM" id="CLU_012526_0_0_1"/>
<dbReference type="InParanoid" id="Q8NGK2"/>
<dbReference type="OMA" id="FHMPSPD"/>
<dbReference type="OrthoDB" id="5969463at2759"/>
<dbReference type="PAN-GO" id="Q8NGK2">
    <property type="GO annotations" value="0 GO annotations based on evolutionary models"/>
</dbReference>
<dbReference type="PhylomeDB" id="Q8NGK2"/>
<dbReference type="TreeFam" id="TF352745"/>
<dbReference type="PathwayCommons" id="Q8NGK2"/>
<dbReference type="BioGRID-ORCS" id="143496">
    <property type="hits" value="9 hits in 737 CRISPR screens"/>
</dbReference>
<dbReference type="GeneWiki" id="OR52B4"/>
<dbReference type="GenomeRNAi" id="143496"/>
<dbReference type="Pharos" id="Q8NGK2">
    <property type="development level" value="Tdark"/>
</dbReference>
<dbReference type="PRO" id="PR:Q8NGK2"/>
<dbReference type="Proteomes" id="UP000005640">
    <property type="component" value="Chromosome 11"/>
</dbReference>
<dbReference type="RNAct" id="Q8NGK2">
    <property type="molecule type" value="protein"/>
</dbReference>
<dbReference type="ExpressionAtlas" id="Q8NGK2">
    <property type="expression patterns" value="baseline and differential"/>
</dbReference>
<dbReference type="GO" id="GO:0005886">
    <property type="term" value="C:plasma membrane"/>
    <property type="evidence" value="ECO:0000318"/>
    <property type="project" value="GO_Central"/>
</dbReference>
<dbReference type="GO" id="GO:0004930">
    <property type="term" value="F:G protein-coupled receptor activity"/>
    <property type="evidence" value="ECO:0007669"/>
    <property type="project" value="UniProtKB-KW"/>
</dbReference>
<dbReference type="GO" id="GO:0004984">
    <property type="term" value="F:olfactory receptor activity"/>
    <property type="evidence" value="ECO:0000318"/>
    <property type="project" value="GO_Central"/>
</dbReference>
<dbReference type="GO" id="GO:0050890">
    <property type="term" value="P:cognition"/>
    <property type="evidence" value="ECO:0000315"/>
    <property type="project" value="UniProtKB"/>
</dbReference>
<dbReference type="CDD" id="cd15221">
    <property type="entry name" value="7tmA_OR52B-like"/>
    <property type="match status" value="1"/>
</dbReference>
<dbReference type="FunFam" id="1.20.1070.10:FF:000006">
    <property type="entry name" value="Olfactory receptor"/>
    <property type="match status" value="1"/>
</dbReference>
<dbReference type="Gene3D" id="1.20.1070.10">
    <property type="entry name" value="Rhodopsin 7-helix transmembrane proteins"/>
    <property type="match status" value="1"/>
</dbReference>
<dbReference type="InterPro" id="IPR000276">
    <property type="entry name" value="GPCR_Rhodpsn"/>
</dbReference>
<dbReference type="InterPro" id="IPR017452">
    <property type="entry name" value="GPCR_Rhodpsn_7TM"/>
</dbReference>
<dbReference type="InterPro" id="IPR000725">
    <property type="entry name" value="Olfact_rcpt"/>
</dbReference>
<dbReference type="InterPro" id="IPR050402">
    <property type="entry name" value="OR51/52/56-like"/>
</dbReference>
<dbReference type="PANTHER" id="PTHR26450:SF89">
    <property type="entry name" value="OLFACTORY RECEPTOR 52B4"/>
    <property type="match status" value="1"/>
</dbReference>
<dbReference type="PANTHER" id="PTHR26450">
    <property type="entry name" value="OLFACTORY RECEPTOR 56B1-RELATED"/>
    <property type="match status" value="1"/>
</dbReference>
<dbReference type="Pfam" id="PF13853">
    <property type="entry name" value="7tm_4"/>
    <property type="match status" value="1"/>
</dbReference>
<dbReference type="PRINTS" id="PR00237">
    <property type="entry name" value="GPCRRHODOPSN"/>
</dbReference>
<dbReference type="PRINTS" id="PR00245">
    <property type="entry name" value="OLFACTORYR"/>
</dbReference>
<dbReference type="SUPFAM" id="SSF81321">
    <property type="entry name" value="Family A G protein-coupled receptor-like"/>
    <property type="match status" value="1"/>
</dbReference>
<dbReference type="PROSITE" id="PS50262">
    <property type="entry name" value="G_PROTEIN_RECEP_F1_2"/>
    <property type="match status" value="1"/>
</dbReference>
<protein>
    <recommendedName>
        <fullName>Olfactory receptor 52B4</fullName>
    </recommendedName>
    <alternativeName>
        <fullName>Olfactory receptor OR11-3</fullName>
    </alternativeName>
</protein>
<proteinExistence type="inferred from homology"/>
<accession>Q8NGK2</accession>
<accession>A6NP68</accession>
<accession>Q6IFK6</accession>
<keyword id="KW-1003">Cell membrane</keyword>
<keyword id="KW-1015">Disulfide bond</keyword>
<keyword id="KW-0297">G-protein coupled receptor</keyword>
<keyword id="KW-0325">Glycoprotein</keyword>
<keyword id="KW-0472">Membrane</keyword>
<keyword id="KW-0552">Olfaction</keyword>
<keyword id="KW-0675">Receptor</keyword>
<keyword id="KW-1185">Reference proteome</keyword>
<keyword id="KW-0716">Sensory transduction</keyword>
<keyword id="KW-0807">Transducer</keyword>
<keyword id="KW-0812">Transmembrane</keyword>
<keyword id="KW-1133">Transmembrane helix</keyword>
<reference key="1">
    <citation type="submission" date="2001-07" db="EMBL/GenBank/DDBJ databases">
        <title>Genome-wide discovery and analysis of human seven transmembrane helix receptor genes.</title>
        <authorList>
            <person name="Suwa M."/>
            <person name="Sato T."/>
            <person name="Okouchi I."/>
            <person name="Arita M."/>
            <person name="Futami K."/>
            <person name="Matsumoto S."/>
            <person name="Tsutsumi S."/>
            <person name="Aburatani H."/>
            <person name="Asai K."/>
            <person name="Akiyama Y."/>
        </authorList>
    </citation>
    <scope>NUCLEOTIDE SEQUENCE [GENOMIC DNA]</scope>
</reference>
<reference key="2">
    <citation type="journal article" date="2006" name="Nature">
        <title>Human chromosome 11 DNA sequence and analysis including novel gene identification.</title>
        <authorList>
            <person name="Taylor T.D."/>
            <person name="Noguchi H."/>
            <person name="Totoki Y."/>
            <person name="Toyoda A."/>
            <person name="Kuroki Y."/>
            <person name="Dewar K."/>
            <person name="Lloyd C."/>
            <person name="Itoh T."/>
            <person name="Takeda T."/>
            <person name="Kim D.-W."/>
            <person name="She X."/>
            <person name="Barlow K.F."/>
            <person name="Bloom T."/>
            <person name="Bruford E."/>
            <person name="Chang J.L."/>
            <person name="Cuomo C.A."/>
            <person name="Eichler E."/>
            <person name="FitzGerald M.G."/>
            <person name="Jaffe D.B."/>
            <person name="LaButti K."/>
            <person name="Nicol R."/>
            <person name="Park H.-S."/>
            <person name="Seaman C."/>
            <person name="Sougnez C."/>
            <person name="Yang X."/>
            <person name="Zimmer A.R."/>
            <person name="Zody M.C."/>
            <person name="Birren B.W."/>
            <person name="Nusbaum C."/>
            <person name="Fujiyama A."/>
            <person name="Hattori M."/>
            <person name="Rogers J."/>
            <person name="Lander E.S."/>
            <person name="Sakaki Y."/>
        </authorList>
    </citation>
    <scope>NUCLEOTIDE SEQUENCE [LARGE SCALE GENOMIC DNA]</scope>
</reference>
<reference key="3">
    <citation type="submission" date="2005-09" db="EMBL/GenBank/DDBJ databases">
        <authorList>
            <person name="Mural R.J."/>
            <person name="Istrail S."/>
            <person name="Sutton G.G."/>
            <person name="Florea L."/>
            <person name="Halpern A.L."/>
            <person name="Mobarry C.M."/>
            <person name="Lippert R."/>
            <person name="Walenz B."/>
            <person name="Shatkay H."/>
            <person name="Dew I."/>
            <person name="Miller J.R."/>
            <person name="Flanigan M.J."/>
            <person name="Edwards N.J."/>
            <person name="Bolanos R."/>
            <person name="Fasulo D."/>
            <person name="Halldorsson B.V."/>
            <person name="Hannenhalli S."/>
            <person name="Turner R."/>
            <person name="Yooseph S."/>
            <person name="Lu F."/>
            <person name="Nusskern D.R."/>
            <person name="Shue B.C."/>
            <person name="Zheng X.H."/>
            <person name="Zhong F."/>
            <person name="Delcher A.L."/>
            <person name="Huson D.H."/>
            <person name="Kravitz S.A."/>
            <person name="Mouchard L."/>
            <person name="Reinert K."/>
            <person name="Remington K.A."/>
            <person name="Clark A.G."/>
            <person name="Waterman M.S."/>
            <person name="Eichler E.E."/>
            <person name="Adams M.D."/>
            <person name="Hunkapiller M.W."/>
            <person name="Myers E.W."/>
            <person name="Venter J.C."/>
        </authorList>
    </citation>
    <scope>NUCLEOTIDE SEQUENCE [LARGE SCALE GENOMIC DNA]</scope>
</reference>
<reference key="4">
    <citation type="journal article" date="2004" name="Proc. Natl. Acad. Sci. U.S.A.">
        <title>The human olfactory receptor gene family.</title>
        <authorList>
            <person name="Malnic B."/>
            <person name="Godfrey P.A."/>
            <person name="Buck L.B."/>
        </authorList>
    </citation>
    <scope>IDENTIFICATION</scope>
</reference>
<reference key="5">
    <citation type="journal article" date="2004" name="Proc. Natl. Acad. Sci. U.S.A.">
        <authorList>
            <person name="Malnic B."/>
            <person name="Godfrey P.A."/>
            <person name="Buck L.B."/>
        </authorList>
    </citation>
    <scope>ERRATUM OF PUBMED:14983052</scope>
</reference>
<reference key="6">
    <citation type="journal article" date="2003" name="Nat. Genet.">
        <title>Different noses for different people.</title>
        <authorList>
            <person name="Menashe I."/>
            <person name="Man O."/>
            <person name="Lancet D."/>
            <person name="Gilad Y."/>
        </authorList>
    </citation>
    <scope>POLYMORPHISM</scope>
</reference>
<evidence type="ECO:0000255" key="1"/>
<evidence type="ECO:0000255" key="2">
    <source>
        <dbReference type="PROSITE-ProRule" id="PRU00521"/>
    </source>
</evidence>
<evidence type="ECO:0000305" key="3"/>
<sequence length="314" mass="35584">MPTVNHSGTSHTVFHLLGIPGLQDQHMWISIPFFISYVTALLGNSLLIFIILTKRSLHEPMYLFLCMLAGADIVLSTCTIPQALAIFWFRAGDISLDRCITQLFFIHSTFISESGILLVMAFDHYIAICYPLRYTTILTNALIKKICVTVSLRSYGTIFPIIFLLKRLTFCQNNIIPHTFCEHIGLAKYACNDIRINIWYGFSILMSTVVLDVVLIFISYMLILHAVFHMPSPDACHKALNTFGSHVCIIILFYGSGIFTILTQRFGRHIPPCIHIPLANVCILAPPMLNPIIYGIKTKQIQEQVVQFLFIKQK</sequence>
<comment type="function">
    <text evidence="3">Odorant receptor.</text>
</comment>
<comment type="subcellular location">
    <subcellularLocation>
        <location>Cell membrane</location>
        <topology>Multi-pass membrane protein</topology>
    </subcellularLocation>
</comment>
<comment type="polymorphism">
    <text>A stop codon at position Ala-40 in the gene coding for this protein is responsible for functional diversity thus producing a pseudogene. The stop codon is more frequent in non-Africans than in African-Americans.</text>
</comment>
<comment type="similarity">
    <text evidence="2">Belongs to the G-protein coupled receptor 1 family.</text>
</comment>
<comment type="online information" name="Human Olfactory Receptor Data Exploratorium (HORDE)">
    <link uri="http://genome.weizmann.ac.il/horde/card/index/symbol:OR52B4"/>
</comment>